<protein>
    <recommendedName>
        <fullName evidence="1">Probable molybdenum cofactor guanylyltransferase</fullName>
        <shortName evidence="1">MoCo guanylyltransferase</shortName>
        <ecNumber evidence="1">2.7.7.77</ecNumber>
    </recommendedName>
    <alternativeName>
        <fullName evidence="1">GTP:molybdopterin guanylyltransferase</fullName>
    </alternativeName>
    <alternativeName>
        <fullName evidence="1">Mo-MPT guanylyltransferase</fullName>
    </alternativeName>
    <alternativeName>
        <fullName evidence="1">Molybdopterin guanylyltransferase</fullName>
    </alternativeName>
    <alternativeName>
        <fullName evidence="1">Molybdopterin-guanine dinucleotide synthase</fullName>
        <shortName evidence="1">MGD synthase</shortName>
    </alternativeName>
</protein>
<evidence type="ECO:0000255" key="1">
    <source>
        <dbReference type="HAMAP-Rule" id="MF_00316"/>
    </source>
</evidence>
<organism>
    <name type="scientific">Clostridium perfringens (strain ATCC 13124 / DSM 756 / JCM 1290 / NCIMB 6125 / NCTC 8237 / Type A)</name>
    <dbReference type="NCBI Taxonomy" id="195103"/>
    <lineage>
        <taxon>Bacteria</taxon>
        <taxon>Bacillati</taxon>
        <taxon>Bacillota</taxon>
        <taxon>Clostridia</taxon>
        <taxon>Eubacteriales</taxon>
        <taxon>Clostridiaceae</taxon>
        <taxon>Clostridium</taxon>
    </lineage>
</organism>
<proteinExistence type="inferred from homology"/>
<dbReference type="EC" id="2.7.7.77" evidence="1"/>
<dbReference type="EMBL" id="CP000246">
    <property type="protein sequence ID" value="ABG83536.1"/>
    <property type="molecule type" value="Genomic_DNA"/>
</dbReference>
<dbReference type="RefSeq" id="WP_011590955.1">
    <property type="nucleotide sequence ID" value="NC_008261.1"/>
</dbReference>
<dbReference type="SMR" id="Q0TPG4"/>
<dbReference type="STRING" id="195103.CPF_2047"/>
<dbReference type="PaxDb" id="195103-CPF_2047"/>
<dbReference type="KEGG" id="cpf:CPF_2047"/>
<dbReference type="eggNOG" id="COG0746">
    <property type="taxonomic scope" value="Bacteria"/>
</dbReference>
<dbReference type="HOGENOM" id="CLU_055597_2_0_9"/>
<dbReference type="Proteomes" id="UP000001823">
    <property type="component" value="Chromosome"/>
</dbReference>
<dbReference type="GO" id="GO:0005737">
    <property type="term" value="C:cytoplasm"/>
    <property type="evidence" value="ECO:0007669"/>
    <property type="project" value="UniProtKB-SubCell"/>
</dbReference>
<dbReference type="GO" id="GO:0005525">
    <property type="term" value="F:GTP binding"/>
    <property type="evidence" value="ECO:0007669"/>
    <property type="project" value="UniProtKB-UniRule"/>
</dbReference>
<dbReference type="GO" id="GO:0046872">
    <property type="term" value="F:metal ion binding"/>
    <property type="evidence" value="ECO:0007669"/>
    <property type="project" value="UniProtKB-KW"/>
</dbReference>
<dbReference type="GO" id="GO:0061603">
    <property type="term" value="F:molybdenum cofactor guanylyltransferase activity"/>
    <property type="evidence" value="ECO:0007669"/>
    <property type="project" value="UniProtKB-EC"/>
</dbReference>
<dbReference type="GO" id="GO:0006777">
    <property type="term" value="P:Mo-molybdopterin cofactor biosynthetic process"/>
    <property type="evidence" value="ECO:0007669"/>
    <property type="project" value="UniProtKB-KW"/>
</dbReference>
<dbReference type="CDD" id="cd02503">
    <property type="entry name" value="MobA"/>
    <property type="match status" value="1"/>
</dbReference>
<dbReference type="Gene3D" id="3.90.550.10">
    <property type="entry name" value="Spore Coat Polysaccharide Biosynthesis Protein SpsA, Chain A"/>
    <property type="match status" value="1"/>
</dbReference>
<dbReference type="HAMAP" id="MF_00316">
    <property type="entry name" value="MobA"/>
    <property type="match status" value="1"/>
</dbReference>
<dbReference type="InterPro" id="IPR025877">
    <property type="entry name" value="MobA-like_NTP_Trfase"/>
</dbReference>
<dbReference type="InterPro" id="IPR013482">
    <property type="entry name" value="Molybde_CF_guanTrfase"/>
</dbReference>
<dbReference type="InterPro" id="IPR029044">
    <property type="entry name" value="Nucleotide-diphossugar_trans"/>
</dbReference>
<dbReference type="PANTHER" id="PTHR19136">
    <property type="entry name" value="MOLYBDENUM COFACTOR GUANYLYLTRANSFERASE"/>
    <property type="match status" value="1"/>
</dbReference>
<dbReference type="PANTHER" id="PTHR19136:SF81">
    <property type="entry name" value="MOLYBDENUM COFACTOR GUANYLYLTRANSFERASE"/>
    <property type="match status" value="1"/>
</dbReference>
<dbReference type="Pfam" id="PF12804">
    <property type="entry name" value="NTP_transf_3"/>
    <property type="match status" value="1"/>
</dbReference>
<dbReference type="SUPFAM" id="SSF53448">
    <property type="entry name" value="Nucleotide-diphospho-sugar transferases"/>
    <property type="match status" value="1"/>
</dbReference>
<reference key="1">
    <citation type="journal article" date="2006" name="Genome Res.">
        <title>Skewed genomic variability in strains of the toxigenic bacterial pathogen, Clostridium perfringens.</title>
        <authorList>
            <person name="Myers G.S.A."/>
            <person name="Rasko D.A."/>
            <person name="Cheung J.K."/>
            <person name="Ravel J."/>
            <person name="Seshadri R."/>
            <person name="DeBoy R.T."/>
            <person name="Ren Q."/>
            <person name="Varga J."/>
            <person name="Awad M.M."/>
            <person name="Brinkac L.M."/>
            <person name="Daugherty S.C."/>
            <person name="Haft D.H."/>
            <person name="Dodson R.J."/>
            <person name="Madupu R."/>
            <person name="Nelson W.C."/>
            <person name="Rosovitz M.J."/>
            <person name="Sullivan S.A."/>
            <person name="Khouri H."/>
            <person name="Dimitrov G.I."/>
            <person name="Watkins K.L."/>
            <person name="Mulligan S."/>
            <person name="Benton J."/>
            <person name="Radune D."/>
            <person name="Fisher D.J."/>
            <person name="Atkins H.S."/>
            <person name="Hiscox T."/>
            <person name="Jost B.H."/>
            <person name="Billington S.J."/>
            <person name="Songer J.G."/>
            <person name="McClane B.A."/>
            <person name="Titball R.W."/>
            <person name="Rood J.I."/>
            <person name="Melville S.B."/>
            <person name="Paulsen I.T."/>
        </authorList>
    </citation>
    <scope>NUCLEOTIDE SEQUENCE [LARGE SCALE GENOMIC DNA]</scope>
    <source>
        <strain>ATCC 13124 / DSM 756 / JCM 1290 / NCIMB 6125 / NCTC 8237 / S 107 / Type A</strain>
    </source>
</reference>
<gene>
    <name evidence="1" type="primary">mobA</name>
    <name type="ordered locus">CPF_2047</name>
</gene>
<accession>Q0TPG4</accession>
<feature type="chain" id="PRO_1000019117" description="Probable molybdenum cofactor guanylyltransferase">
    <location>
        <begin position="1"/>
        <end position="198"/>
    </location>
</feature>
<feature type="binding site" evidence="1">
    <location>
        <begin position="9"/>
        <end position="11"/>
    </location>
    <ligand>
        <name>GTP</name>
        <dbReference type="ChEBI" id="CHEBI:37565"/>
    </ligand>
</feature>
<feature type="binding site" evidence="1">
    <location>
        <position position="22"/>
    </location>
    <ligand>
        <name>GTP</name>
        <dbReference type="ChEBI" id="CHEBI:37565"/>
    </ligand>
</feature>
<feature type="binding site" evidence="1">
    <location>
        <position position="66"/>
    </location>
    <ligand>
        <name>GTP</name>
        <dbReference type="ChEBI" id="CHEBI:37565"/>
    </ligand>
</feature>
<feature type="binding site" evidence="1">
    <location>
        <position position="95"/>
    </location>
    <ligand>
        <name>GTP</name>
        <dbReference type="ChEBI" id="CHEBI:37565"/>
    </ligand>
</feature>
<feature type="binding site" evidence="1">
    <location>
        <position position="95"/>
    </location>
    <ligand>
        <name>Mg(2+)</name>
        <dbReference type="ChEBI" id="CHEBI:18420"/>
    </ligand>
</feature>
<comment type="function">
    <text evidence="1">Transfers a GMP moiety from GTP to Mo-molybdopterin (Mo-MPT) cofactor (Moco or molybdenum cofactor) to form Mo-molybdopterin guanine dinucleotide (Mo-MGD) cofactor.</text>
</comment>
<comment type="catalytic activity">
    <reaction evidence="1">
        <text>Mo-molybdopterin + GTP + H(+) = Mo-molybdopterin guanine dinucleotide + diphosphate</text>
        <dbReference type="Rhea" id="RHEA:34243"/>
        <dbReference type="ChEBI" id="CHEBI:15378"/>
        <dbReference type="ChEBI" id="CHEBI:33019"/>
        <dbReference type="ChEBI" id="CHEBI:37565"/>
        <dbReference type="ChEBI" id="CHEBI:71302"/>
        <dbReference type="ChEBI" id="CHEBI:71310"/>
        <dbReference type="EC" id="2.7.7.77"/>
    </reaction>
</comment>
<comment type="cofactor">
    <cofactor evidence="1">
        <name>Mg(2+)</name>
        <dbReference type="ChEBI" id="CHEBI:18420"/>
    </cofactor>
</comment>
<comment type="subcellular location">
    <subcellularLocation>
        <location evidence="1">Cytoplasm</location>
    </subcellularLocation>
</comment>
<comment type="domain">
    <text evidence="1">The N-terminal domain determines nucleotide recognition and specific binding, while the C-terminal domain determines the specific binding to the target protein.</text>
</comment>
<comment type="similarity">
    <text evidence="1">Belongs to the MobA family.</text>
</comment>
<keyword id="KW-0963">Cytoplasm</keyword>
<keyword id="KW-0342">GTP-binding</keyword>
<keyword id="KW-0460">Magnesium</keyword>
<keyword id="KW-0479">Metal-binding</keyword>
<keyword id="KW-0501">Molybdenum cofactor biosynthesis</keyword>
<keyword id="KW-0547">Nucleotide-binding</keyword>
<keyword id="KW-0808">Transferase</keyword>
<name>MOBA_CLOP1</name>
<sequence length="198" mass="23217">MIKKSAAILAGGKSSRMNYRNKAFLKYEEDYFIERIIKALEDYEEIIIISNNPGEYKEFGLKVFKDIYPGQGPLSGIHSALNHIKNDYCLVVACDMPFINKDVVNYLGNIKEDYEILIPKFQERLQPLCAIYKKSCKDIMEKELINNSNKLIKTCFKFSMKVVEEFPFIEKVHKKEIKNFYNINTVDEYEDLIKKKEI</sequence>